<dbReference type="EC" id="7.1.2.2" evidence="1"/>
<dbReference type="EMBL" id="CP001111">
    <property type="protein sequence ID" value="ACF53210.1"/>
    <property type="molecule type" value="Genomic_DNA"/>
</dbReference>
<dbReference type="RefSeq" id="WP_006394537.1">
    <property type="nucleotide sequence ID" value="NC_011071.1"/>
</dbReference>
<dbReference type="SMR" id="B4SJR9"/>
<dbReference type="STRING" id="391008.Smal_3511"/>
<dbReference type="KEGG" id="smt:Smal_3511"/>
<dbReference type="eggNOG" id="COG0055">
    <property type="taxonomic scope" value="Bacteria"/>
</dbReference>
<dbReference type="HOGENOM" id="CLU_022398_0_2_6"/>
<dbReference type="OrthoDB" id="9801639at2"/>
<dbReference type="Proteomes" id="UP000001867">
    <property type="component" value="Chromosome"/>
</dbReference>
<dbReference type="GO" id="GO:0005886">
    <property type="term" value="C:plasma membrane"/>
    <property type="evidence" value="ECO:0007669"/>
    <property type="project" value="UniProtKB-SubCell"/>
</dbReference>
<dbReference type="GO" id="GO:0045259">
    <property type="term" value="C:proton-transporting ATP synthase complex"/>
    <property type="evidence" value="ECO:0007669"/>
    <property type="project" value="UniProtKB-KW"/>
</dbReference>
<dbReference type="GO" id="GO:0005524">
    <property type="term" value="F:ATP binding"/>
    <property type="evidence" value="ECO:0007669"/>
    <property type="project" value="UniProtKB-UniRule"/>
</dbReference>
<dbReference type="GO" id="GO:0016887">
    <property type="term" value="F:ATP hydrolysis activity"/>
    <property type="evidence" value="ECO:0007669"/>
    <property type="project" value="InterPro"/>
</dbReference>
<dbReference type="GO" id="GO:0046933">
    <property type="term" value="F:proton-transporting ATP synthase activity, rotational mechanism"/>
    <property type="evidence" value="ECO:0007669"/>
    <property type="project" value="UniProtKB-UniRule"/>
</dbReference>
<dbReference type="CDD" id="cd18110">
    <property type="entry name" value="ATP-synt_F1_beta_C"/>
    <property type="match status" value="1"/>
</dbReference>
<dbReference type="CDD" id="cd18115">
    <property type="entry name" value="ATP-synt_F1_beta_N"/>
    <property type="match status" value="1"/>
</dbReference>
<dbReference type="CDD" id="cd01133">
    <property type="entry name" value="F1-ATPase_beta_CD"/>
    <property type="match status" value="1"/>
</dbReference>
<dbReference type="FunFam" id="1.10.1140.10:FF:000001">
    <property type="entry name" value="ATP synthase subunit beta"/>
    <property type="match status" value="1"/>
</dbReference>
<dbReference type="FunFam" id="3.40.50.300:FF:000004">
    <property type="entry name" value="ATP synthase subunit beta"/>
    <property type="match status" value="1"/>
</dbReference>
<dbReference type="Gene3D" id="2.40.10.170">
    <property type="match status" value="1"/>
</dbReference>
<dbReference type="Gene3D" id="1.10.1140.10">
    <property type="entry name" value="Bovine Mitochondrial F1-atpase, Atp Synthase Beta Chain, Chain D, domain 3"/>
    <property type="match status" value="1"/>
</dbReference>
<dbReference type="Gene3D" id="3.40.50.300">
    <property type="entry name" value="P-loop containing nucleotide triphosphate hydrolases"/>
    <property type="match status" value="1"/>
</dbReference>
<dbReference type="HAMAP" id="MF_01347">
    <property type="entry name" value="ATP_synth_beta_bact"/>
    <property type="match status" value="1"/>
</dbReference>
<dbReference type="InterPro" id="IPR003593">
    <property type="entry name" value="AAA+_ATPase"/>
</dbReference>
<dbReference type="InterPro" id="IPR055190">
    <property type="entry name" value="ATP-synt_VA_C"/>
</dbReference>
<dbReference type="InterPro" id="IPR005722">
    <property type="entry name" value="ATP_synth_F1_bsu"/>
</dbReference>
<dbReference type="InterPro" id="IPR020003">
    <property type="entry name" value="ATPase_a/bsu_AS"/>
</dbReference>
<dbReference type="InterPro" id="IPR050053">
    <property type="entry name" value="ATPase_alpha/beta_chains"/>
</dbReference>
<dbReference type="InterPro" id="IPR004100">
    <property type="entry name" value="ATPase_F1/V1/A1_a/bsu_N"/>
</dbReference>
<dbReference type="InterPro" id="IPR036121">
    <property type="entry name" value="ATPase_F1/V1/A1_a/bsu_N_sf"/>
</dbReference>
<dbReference type="InterPro" id="IPR000194">
    <property type="entry name" value="ATPase_F1/V1/A1_a/bsu_nucl-bd"/>
</dbReference>
<dbReference type="InterPro" id="IPR024034">
    <property type="entry name" value="ATPase_F1/V1_b/a_C"/>
</dbReference>
<dbReference type="InterPro" id="IPR027417">
    <property type="entry name" value="P-loop_NTPase"/>
</dbReference>
<dbReference type="NCBIfam" id="TIGR01039">
    <property type="entry name" value="atpD"/>
    <property type="match status" value="1"/>
</dbReference>
<dbReference type="PANTHER" id="PTHR15184">
    <property type="entry name" value="ATP SYNTHASE"/>
    <property type="match status" value="1"/>
</dbReference>
<dbReference type="PANTHER" id="PTHR15184:SF71">
    <property type="entry name" value="ATP SYNTHASE SUBUNIT BETA, MITOCHONDRIAL"/>
    <property type="match status" value="1"/>
</dbReference>
<dbReference type="Pfam" id="PF00006">
    <property type="entry name" value="ATP-synt_ab"/>
    <property type="match status" value="1"/>
</dbReference>
<dbReference type="Pfam" id="PF02874">
    <property type="entry name" value="ATP-synt_ab_N"/>
    <property type="match status" value="1"/>
</dbReference>
<dbReference type="Pfam" id="PF22919">
    <property type="entry name" value="ATP-synt_VA_C"/>
    <property type="match status" value="1"/>
</dbReference>
<dbReference type="SMART" id="SM00382">
    <property type="entry name" value="AAA"/>
    <property type="match status" value="1"/>
</dbReference>
<dbReference type="SUPFAM" id="SSF47917">
    <property type="entry name" value="C-terminal domain of alpha and beta subunits of F1 ATP synthase"/>
    <property type="match status" value="1"/>
</dbReference>
<dbReference type="SUPFAM" id="SSF50615">
    <property type="entry name" value="N-terminal domain of alpha and beta subunits of F1 ATP synthase"/>
    <property type="match status" value="1"/>
</dbReference>
<dbReference type="SUPFAM" id="SSF52540">
    <property type="entry name" value="P-loop containing nucleoside triphosphate hydrolases"/>
    <property type="match status" value="1"/>
</dbReference>
<dbReference type="PROSITE" id="PS00152">
    <property type="entry name" value="ATPASE_ALPHA_BETA"/>
    <property type="match status" value="1"/>
</dbReference>
<sequence>MSQGKIVQIIGAVVDVEFPRESVPKVYDALKVENTEITLEVQQQLGDGVVRCIALGSTDGLKRNLVAVNTGRGISVPVGAGTLGRIMDVLGRPIDEAGPVAASDSWEIHRDAPSYEDQSPATELLETGIKVIDLMCPFAKGGKVGLFGGAGVGKTVNMMELINNIAKAHSGLSVFAGVGERTREGNDFYHEMKDSNVLDKVAMVYGQMNEPPGNRLRVALTGLTMAEYFRDEKDENGKGKDVLLFVDNIYRYTLAGTEVSALLGRMPSAVGYQPTLAEEMGVLQERITSTKNGSITSIQAVYVPADDLTDPSPATTFAHLDSTVTLSRSIASLGIYPAVDPLDSTSRQMDPLVIGHEHYDTAQRVQQTLQKYKELKDIIAILGMDELSEEDKQAVSRARKIERFFSQPFHVAEVFTGSPGKYVSLKDTIRGFKAIVDGEYDHLPEQAFYMVGSIEEAVEKAKKMAEKA</sequence>
<gene>
    <name evidence="1" type="primary">atpD</name>
    <name type="ordered locus">Smal_3511</name>
</gene>
<name>ATPB_STRM5</name>
<keyword id="KW-0066">ATP synthesis</keyword>
<keyword id="KW-0067">ATP-binding</keyword>
<keyword id="KW-0997">Cell inner membrane</keyword>
<keyword id="KW-1003">Cell membrane</keyword>
<keyword id="KW-0139">CF(1)</keyword>
<keyword id="KW-0375">Hydrogen ion transport</keyword>
<keyword id="KW-0406">Ion transport</keyword>
<keyword id="KW-0472">Membrane</keyword>
<keyword id="KW-0547">Nucleotide-binding</keyword>
<keyword id="KW-1278">Translocase</keyword>
<keyword id="KW-0813">Transport</keyword>
<proteinExistence type="inferred from homology"/>
<organism>
    <name type="scientific">Stenotrophomonas maltophilia (strain R551-3)</name>
    <dbReference type="NCBI Taxonomy" id="391008"/>
    <lineage>
        <taxon>Bacteria</taxon>
        <taxon>Pseudomonadati</taxon>
        <taxon>Pseudomonadota</taxon>
        <taxon>Gammaproteobacteria</taxon>
        <taxon>Lysobacterales</taxon>
        <taxon>Lysobacteraceae</taxon>
        <taxon>Stenotrophomonas</taxon>
        <taxon>Stenotrophomonas maltophilia group</taxon>
    </lineage>
</organism>
<accession>B4SJR9</accession>
<comment type="function">
    <text evidence="1">Produces ATP from ADP in the presence of a proton gradient across the membrane. The catalytic sites are hosted primarily by the beta subunits.</text>
</comment>
<comment type="catalytic activity">
    <reaction evidence="1">
        <text>ATP + H2O + 4 H(+)(in) = ADP + phosphate + 5 H(+)(out)</text>
        <dbReference type="Rhea" id="RHEA:57720"/>
        <dbReference type="ChEBI" id="CHEBI:15377"/>
        <dbReference type="ChEBI" id="CHEBI:15378"/>
        <dbReference type="ChEBI" id="CHEBI:30616"/>
        <dbReference type="ChEBI" id="CHEBI:43474"/>
        <dbReference type="ChEBI" id="CHEBI:456216"/>
        <dbReference type="EC" id="7.1.2.2"/>
    </reaction>
</comment>
<comment type="subunit">
    <text evidence="1">F-type ATPases have 2 components, CF(1) - the catalytic core - and CF(0) - the membrane proton channel. CF(1) has five subunits: alpha(3), beta(3), gamma(1), delta(1), epsilon(1). CF(0) has three main subunits: a(1), b(2) and c(9-12). The alpha and beta chains form an alternating ring which encloses part of the gamma chain. CF(1) is attached to CF(0) by a central stalk formed by the gamma and epsilon chains, while a peripheral stalk is formed by the delta and b chains.</text>
</comment>
<comment type="subcellular location">
    <subcellularLocation>
        <location evidence="1">Cell inner membrane</location>
        <topology evidence="1">Peripheral membrane protein</topology>
    </subcellularLocation>
</comment>
<comment type="similarity">
    <text evidence="1">Belongs to the ATPase alpha/beta chains family.</text>
</comment>
<evidence type="ECO:0000255" key="1">
    <source>
        <dbReference type="HAMAP-Rule" id="MF_01347"/>
    </source>
</evidence>
<reference key="1">
    <citation type="submission" date="2008-06" db="EMBL/GenBank/DDBJ databases">
        <title>Complete sequence of Stenotrophomonas maltophilia R551-3.</title>
        <authorList>
            <consortium name="US DOE Joint Genome Institute"/>
            <person name="Lucas S."/>
            <person name="Copeland A."/>
            <person name="Lapidus A."/>
            <person name="Glavina del Rio T."/>
            <person name="Dalin E."/>
            <person name="Tice H."/>
            <person name="Pitluck S."/>
            <person name="Chain P."/>
            <person name="Malfatti S."/>
            <person name="Shin M."/>
            <person name="Vergez L."/>
            <person name="Lang D."/>
            <person name="Schmutz J."/>
            <person name="Larimer F."/>
            <person name="Land M."/>
            <person name="Hauser L."/>
            <person name="Kyrpides N."/>
            <person name="Mikhailova N."/>
            <person name="Taghavi S."/>
            <person name="Monchy S."/>
            <person name="Newman L."/>
            <person name="Vangronsveld J."/>
            <person name="van der Lelie D."/>
            <person name="Richardson P."/>
        </authorList>
    </citation>
    <scope>NUCLEOTIDE SEQUENCE [LARGE SCALE GENOMIC DNA]</scope>
    <source>
        <strain>R551-3</strain>
    </source>
</reference>
<protein>
    <recommendedName>
        <fullName evidence="1">ATP synthase subunit beta</fullName>
        <ecNumber evidence="1">7.1.2.2</ecNumber>
    </recommendedName>
    <alternativeName>
        <fullName evidence="1">ATP synthase F1 sector subunit beta</fullName>
    </alternativeName>
    <alternativeName>
        <fullName evidence="1">F-ATPase subunit beta</fullName>
    </alternativeName>
</protein>
<feature type="chain" id="PRO_1000143550" description="ATP synthase subunit beta">
    <location>
        <begin position="1"/>
        <end position="468"/>
    </location>
</feature>
<feature type="binding site" evidence="1">
    <location>
        <begin position="148"/>
        <end position="155"/>
    </location>
    <ligand>
        <name>ATP</name>
        <dbReference type="ChEBI" id="CHEBI:30616"/>
    </ligand>
</feature>